<dbReference type="EC" id="2.8.1.1" evidence="1"/>
<dbReference type="EMBL" id="CP000822">
    <property type="protein sequence ID" value="ABV15889.1"/>
    <property type="molecule type" value="Genomic_DNA"/>
</dbReference>
<dbReference type="RefSeq" id="WP_012135529.1">
    <property type="nucleotide sequence ID" value="NC_009792.1"/>
</dbReference>
<dbReference type="SMR" id="A8AQX5"/>
<dbReference type="STRING" id="290338.CKO_04844"/>
<dbReference type="GeneID" id="45138342"/>
<dbReference type="KEGG" id="cko:CKO_04844"/>
<dbReference type="HOGENOM" id="CLU_089574_14_0_6"/>
<dbReference type="OrthoDB" id="9811849at2"/>
<dbReference type="Proteomes" id="UP000008148">
    <property type="component" value="Chromosome"/>
</dbReference>
<dbReference type="GO" id="GO:0005737">
    <property type="term" value="C:cytoplasm"/>
    <property type="evidence" value="ECO:0007669"/>
    <property type="project" value="UniProtKB-SubCell"/>
</dbReference>
<dbReference type="GO" id="GO:0004792">
    <property type="term" value="F:thiosulfate-cyanide sulfurtransferase activity"/>
    <property type="evidence" value="ECO:0007669"/>
    <property type="project" value="UniProtKB-UniRule"/>
</dbReference>
<dbReference type="GO" id="GO:0006071">
    <property type="term" value="P:glycerol metabolic process"/>
    <property type="evidence" value="ECO:0007669"/>
    <property type="project" value="UniProtKB-UniRule"/>
</dbReference>
<dbReference type="CDD" id="cd01444">
    <property type="entry name" value="GlpE_ST"/>
    <property type="match status" value="1"/>
</dbReference>
<dbReference type="FunFam" id="3.40.250.10:FF:000007">
    <property type="entry name" value="Thiosulfate sulfurtransferase GlpE"/>
    <property type="match status" value="1"/>
</dbReference>
<dbReference type="Gene3D" id="3.40.250.10">
    <property type="entry name" value="Rhodanese-like domain"/>
    <property type="match status" value="1"/>
</dbReference>
<dbReference type="HAMAP" id="MF_01009">
    <property type="entry name" value="Thiosulf_sulfurtr"/>
    <property type="match status" value="1"/>
</dbReference>
<dbReference type="InterPro" id="IPR050229">
    <property type="entry name" value="GlpE_sulfurtransferase"/>
</dbReference>
<dbReference type="InterPro" id="IPR001763">
    <property type="entry name" value="Rhodanese-like_dom"/>
</dbReference>
<dbReference type="InterPro" id="IPR036873">
    <property type="entry name" value="Rhodanese-like_dom_sf"/>
</dbReference>
<dbReference type="InterPro" id="IPR023695">
    <property type="entry name" value="Thiosulf_sulfurTrfase"/>
</dbReference>
<dbReference type="NCBIfam" id="NF001195">
    <property type="entry name" value="PRK00162.1"/>
    <property type="match status" value="1"/>
</dbReference>
<dbReference type="PANTHER" id="PTHR43031">
    <property type="entry name" value="FAD-DEPENDENT OXIDOREDUCTASE"/>
    <property type="match status" value="1"/>
</dbReference>
<dbReference type="PANTHER" id="PTHR43031:SF6">
    <property type="entry name" value="THIOSULFATE SULFURTRANSFERASE GLPE"/>
    <property type="match status" value="1"/>
</dbReference>
<dbReference type="Pfam" id="PF00581">
    <property type="entry name" value="Rhodanese"/>
    <property type="match status" value="1"/>
</dbReference>
<dbReference type="SMART" id="SM00450">
    <property type="entry name" value="RHOD"/>
    <property type="match status" value="1"/>
</dbReference>
<dbReference type="SUPFAM" id="SSF52821">
    <property type="entry name" value="Rhodanese/Cell cycle control phosphatase"/>
    <property type="match status" value="1"/>
</dbReference>
<dbReference type="PROSITE" id="PS50206">
    <property type="entry name" value="RHODANESE_3"/>
    <property type="match status" value="1"/>
</dbReference>
<reference key="1">
    <citation type="submission" date="2007-08" db="EMBL/GenBank/DDBJ databases">
        <authorList>
            <consortium name="The Citrobacter koseri Genome Sequencing Project"/>
            <person name="McClelland M."/>
            <person name="Sanderson E.K."/>
            <person name="Porwollik S."/>
            <person name="Spieth J."/>
            <person name="Clifton W.S."/>
            <person name="Latreille P."/>
            <person name="Courtney L."/>
            <person name="Wang C."/>
            <person name="Pepin K."/>
            <person name="Bhonagiri V."/>
            <person name="Nash W."/>
            <person name="Johnson M."/>
            <person name="Thiruvilangam P."/>
            <person name="Wilson R."/>
        </authorList>
    </citation>
    <scope>NUCLEOTIDE SEQUENCE [LARGE SCALE GENOMIC DNA]</scope>
    <source>
        <strain>ATCC BAA-895 / CDC 4225-83 / SGSC4696</strain>
    </source>
</reference>
<sequence>MDQFECINVEEAHQKLHQGTAVLVDIRDPQSYAMGHTPQAFHLTNDTLGAFMRDHDFDTVVMVMCYHGNSSKGAAQYLLQQGYDAVYSIDGGFDAWHRHFPSEVAFGA</sequence>
<keyword id="KW-0963">Cytoplasm</keyword>
<keyword id="KW-1185">Reference proteome</keyword>
<keyword id="KW-0808">Transferase</keyword>
<name>GLPE_CITK8</name>
<accession>A8AQX5</accession>
<evidence type="ECO:0000255" key="1">
    <source>
        <dbReference type="HAMAP-Rule" id="MF_01009"/>
    </source>
</evidence>
<protein>
    <recommendedName>
        <fullName evidence="1">Thiosulfate sulfurtransferase GlpE</fullName>
        <ecNumber evidence="1">2.8.1.1</ecNumber>
    </recommendedName>
</protein>
<gene>
    <name evidence="1" type="primary">glpE</name>
    <name type="ordered locus">CKO_04844</name>
</gene>
<proteinExistence type="inferred from homology"/>
<organism>
    <name type="scientific">Citrobacter koseri (strain ATCC BAA-895 / CDC 4225-83 / SGSC4696)</name>
    <dbReference type="NCBI Taxonomy" id="290338"/>
    <lineage>
        <taxon>Bacteria</taxon>
        <taxon>Pseudomonadati</taxon>
        <taxon>Pseudomonadota</taxon>
        <taxon>Gammaproteobacteria</taxon>
        <taxon>Enterobacterales</taxon>
        <taxon>Enterobacteriaceae</taxon>
        <taxon>Citrobacter</taxon>
    </lineage>
</organism>
<feature type="chain" id="PRO_1000062955" description="Thiosulfate sulfurtransferase GlpE">
    <location>
        <begin position="1"/>
        <end position="108"/>
    </location>
</feature>
<feature type="domain" description="Rhodanese" evidence="1">
    <location>
        <begin position="17"/>
        <end position="105"/>
    </location>
</feature>
<feature type="active site" description="Cysteine persulfide intermediate" evidence="1">
    <location>
        <position position="65"/>
    </location>
</feature>
<comment type="function">
    <text evidence="1">Transferase that catalyzes the transfer of sulfur from thiosulfate to thiophilic acceptors such as cyanide or dithiols. May function in a CysM-independent thiosulfate assimilation pathway by catalyzing the conversion of thiosulfate to sulfite, which can then be used for L-cysteine biosynthesis.</text>
</comment>
<comment type="catalytic activity">
    <reaction evidence="1">
        <text>thiosulfate + hydrogen cyanide = thiocyanate + sulfite + 2 H(+)</text>
        <dbReference type="Rhea" id="RHEA:16881"/>
        <dbReference type="ChEBI" id="CHEBI:15378"/>
        <dbReference type="ChEBI" id="CHEBI:17359"/>
        <dbReference type="ChEBI" id="CHEBI:18022"/>
        <dbReference type="ChEBI" id="CHEBI:18407"/>
        <dbReference type="ChEBI" id="CHEBI:33542"/>
        <dbReference type="EC" id="2.8.1.1"/>
    </reaction>
</comment>
<comment type="catalytic activity">
    <reaction evidence="1">
        <text>thiosulfate + [thioredoxin]-dithiol = [thioredoxin]-disulfide + hydrogen sulfide + sulfite + 2 H(+)</text>
        <dbReference type="Rhea" id="RHEA:83859"/>
        <dbReference type="Rhea" id="RHEA-COMP:10698"/>
        <dbReference type="Rhea" id="RHEA-COMP:10700"/>
        <dbReference type="ChEBI" id="CHEBI:15378"/>
        <dbReference type="ChEBI" id="CHEBI:17359"/>
        <dbReference type="ChEBI" id="CHEBI:29919"/>
        <dbReference type="ChEBI" id="CHEBI:29950"/>
        <dbReference type="ChEBI" id="CHEBI:33542"/>
        <dbReference type="ChEBI" id="CHEBI:50058"/>
    </reaction>
</comment>
<comment type="subcellular location">
    <subcellularLocation>
        <location evidence="1">Cytoplasm</location>
    </subcellularLocation>
</comment>
<comment type="similarity">
    <text evidence="1">Belongs to the GlpE family.</text>
</comment>